<protein>
    <recommendedName>
        <fullName evidence="2">L-lactate dehydrogenase</fullName>
        <shortName evidence="2">L-LDH</shortName>
        <ecNumber evidence="2">1.1.1.27</ecNumber>
    </recommendedName>
</protein>
<evidence type="ECO:0000250" key="1"/>
<evidence type="ECO:0000255" key="2">
    <source>
        <dbReference type="HAMAP-Rule" id="MF_00488"/>
    </source>
</evidence>
<organism>
    <name type="scientific">Streptococcus pyogenes serotype M6 (strain ATCC BAA-946 / MGAS10394)</name>
    <dbReference type="NCBI Taxonomy" id="286636"/>
    <lineage>
        <taxon>Bacteria</taxon>
        <taxon>Bacillati</taxon>
        <taxon>Bacillota</taxon>
        <taxon>Bacilli</taxon>
        <taxon>Lactobacillales</taxon>
        <taxon>Streptococcaceae</taxon>
        <taxon>Streptococcus</taxon>
    </lineage>
</organism>
<keyword id="KW-0021">Allosteric enzyme</keyword>
<keyword id="KW-0963">Cytoplasm</keyword>
<keyword id="KW-0520">NAD</keyword>
<keyword id="KW-0560">Oxidoreductase</keyword>
<keyword id="KW-0597">Phosphoprotein</keyword>
<accession>Q5XC59</accession>
<comment type="function">
    <text evidence="2">Catalyzes the conversion of lactate to pyruvate.</text>
</comment>
<comment type="catalytic activity">
    <reaction evidence="2">
        <text>(S)-lactate + NAD(+) = pyruvate + NADH + H(+)</text>
        <dbReference type="Rhea" id="RHEA:23444"/>
        <dbReference type="ChEBI" id="CHEBI:15361"/>
        <dbReference type="ChEBI" id="CHEBI:15378"/>
        <dbReference type="ChEBI" id="CHEBI:16651"/>
        <dbReference type="ChEBI" id="CHEBI:57540"/>
        <dbReference type="ChEBI" id="CHEBI:57945"/>
        <dbReference type="EC" id="1.1.1.27"/>
    </reaction>
</comment>
<comment type="activity regulation">
    <text evidence="2">Allosterically activated by fructose 1,6-bisphosphate (FBP).</text>
</comment>
<comment type="pathway">
    <text evidence="2">Fermentation; pyruvate fermentation to lactate; (S)-lactate from pyruvate: step 1/1.</text>
</comment>
<comment type="subunit">
    <text evidence="2">Homotetramer.</text>
</comment>
<comment type="subcellular location">
    <subcellularLocation>
        <location evidence="2">Cytoplasm</location>
    </subcellularLocation>
</comment>
<comment type="similarity">
    <text evidence="2">Belongs to the LDH/MDH superfamily. LDH family.</text>
</comment>
<proteinExistence type="inferred from homology"/>
<name>LDH_STRP6</name>
<gene>
    <name evidence="2" type="primary">ldh</name>
    <name type="ordered locus">M6_Spy0869</name>
</gene>
<dbReference type="EC" id="1.1.1.27" evidence="2"/>
<dbReference type="EMBL" id="CP000003">
    <property type="protein sequence ID" value="AAT87004.1"/>
    <property type="molecule type" value="Genomic_DNA"/>
</dbReference>
<dbReference type="RefSeq" id="WP_002984645.1">
    <property type="nucleotide sequence ID" value="NC_006086.1"/>
</dbReference>
<dbReference type="SMR" id="Q5XC59"/>
<dbReference type="KEGG" id="spa:M6_Spy0869"/>
<dbReference type="HOGENOM" id="CLU_045401_1_1_9"/>
<dbReference type="UniPathway" id="UPA00554">
    <property type="reaction ID" value="UER00611"/>
</dbReference>
<dbReference type="Proteomes" id="UP000001167">
    <property type="component" value="Chromosome"/>
</dbReference>
<dbReference type="GO" id="GO:0005737">
    <property type="term" value="C:cytoplasm"/>
    <property type="evidence" value="ECO:0007669"/>
    <property type="project" value="UniProtKB-SubCell"/>
</dbReference>
<dbReference type="GO" id="GO:0004459">
    <property type="term" value="F:L-lactate dehydrogenase activity"/>
    <property type="evidence" value="ECO:0007669"/>
    <property type="project" value="UniProtKB-UniRule"/>
</dbReference>
<dbReference type="GO" id="GO:0006096">
    <property type="term" value="P:glycolytic process"/>
    <property type="evidence" value="ECO:0007669"/>
    <property type="project" value="UniProtKB-UniRule"/>
</dbReference>
<dbReference type="GO" id="GO:0006089">
    <property type="term" value="P:lactate metabolic process"/>
    <property type="evidence" value="ECO:0007669"/>
    <property type="project" value="TreeGrafter"/>
</dbReference>
<dbReference type="CDD" id="cd05291">
    <property type="entry name" value="HicDH_like"/>
    <property type="match status" value="1"/>
</dbReference>
<dbReference type="FunFam" id="3.40.50.720:FF:000018">
    <property type="entry name" value="Malate dehydrogenase"/>
    <property type="match status" value="1"/>
</dbReference>
<dbReference type="Gene3D" id="3.90.110.10">
    <property type="entry name" value="Lactate dehydrogenase/glycoside hydrolase, family 4, C-terminal"/>
    <property type="match status" value="1"/>
</dbReference>
<dbReference type="Gene3D" id="3.40.50.720">
    <property type="entry name" value="NAD(P)-binding Rossmann-like Domain"/>
    <property type="match status" value="1"/>
</dbReference>
<dbReference type="HAMAP" id="MF_00488">
    <property type="entry name" value="Lactate_dehydrog"/>
    <property type="match status" value="1"/>
</dbReference>
<dbReference type="InterPro" id="IPR001557">
    <property type="entry name" value="L-lactate/malate_DH"/>
</dbReference>
<dbReference type="InterPro" id="IPR011304">
    <property type="entry name" value="L-lactate_DH"/>
</dbReference>
<dbReference type="InterPro" id="IPR018177">
    <property type="entry name" value="L-lactate_DH_AS"/>
</dbReference>
<dbReference type="InterPro" id="IPR022383">
    <property type="entry name" value="Lactate/malate_DH_C"/>
</dbReference>
<dbReference type="InterPro" id="IPR001236">
    <property type="entry name" value="Lactate/malate_DH_N"/>
</dbReference>
<dbReference type="InterPro" id="IPR015955">
    <property type="entry name" value="Lactate_DH/Glyco_Ohase_4_C"/>
</dbReference>
<dbReference type="InterPro" id="IPR036291">
    <property type="entry name" value="NAD(P)-bd_dom_sf"/>
</dbReference>
<dbReference type="NCBIfam" id="TIGR01771">
    <property type="entry name" value="L-LDH-NAD"/>
    <property type="match status" value="1"/>
</dbReference>
<dbReference type="NCBIfam" id="NF000824">
    <property type="entry name" value="PRK00066.1"/>
    <property type="match status" value="1"/>
</dbReference>
<dbReference type="PANTHER" id="PTHR43128">
    <property type="entry name" value="L-2-HYDROXYCARBOXYLATE DEHYDROGENASE (NAD(P)(+))"/>
    <property type="match status" value="1"/>
</dbReference>
<dbReference type="PANTHER" id="PTHR43128:SF16">
    <property type="entry name" value="L-LACTATE DEHYDROGENASE"/>
    <property type="match status" value="1"/>
</dbReference>
<dbReference type="Pfam" id="PF02866">
    <property type="entry name" value="Ldh_1_C"/>
    <property type="match status" value="1"/>
</dbReference>
<dbReference type="Pfam" id="PF00056">
    <property type="entry name" value="Ldh_1_N"/>
    <property type="match status" value="1"/>
</dbReference>
<dbReference type="PIRSF" id="PIRSF000102">
    <property type="entry name" value="Lac_mal_DH"/>
    <property type="match status" value="1"/>
</dbReference>
<dbReference type="PRINTS" id="PR00086">
    <property type="entry name" value="LLDHDRGNASE"/>
</dbReference>
<dbReference type="SUPFAM" id="SSF56327">
    <property type="entry name" value="LDH C-terminal domain-like"/>
    <property type="match status" value="1"/>
</dbReference>
<dbReference type="SUPFAM" id="SSF51735">
    <property type="entry name" value="NAD(P)-binding Rossmann-fold domains"/>
    <property type="match status" value="1"/>
</dbReference>
<dbReference type="PROSITE" id="PS00064">
    <property type="entry name" value="L_LDH"/>
    <property type="match status" value="1"/>
</dbReference>
<sequence length="327" mass="35272">MTATKQHKKVILVGDGAVGSSYAFALVTQNIAQELGIIDIFKEKTQGDAEDLSHALAFTSPKKIYAADYSDCHDADLVVLTAGAPQKPGETRLDLVEKNLRINKEVVTQIVASGFKGIFLVAANPVDVLTYSTWKFSGFPKERVIGSGTSLDSARFRQALAAKIGVDARSVHAYIMGEHGDSEFAVWSHANVAGVGLYDWLQANRDIDEQGLVDLFISVRDAAYSIINKKGATFYGIAVALARITKAILDDENAVLPLSVFQEGQYEGVEDCYIGQPAIVGAYGIVRPVNIPLNDAELQKMQASANQLKAIIDEAFAKEEFASAAKN</sequence>
<reference key="1">
    <citation type="journal article" date="2004" name="J. Infect. Dis.">
        <title>Progress toward characterization of the group A Streptococcus metagenome: complete genome sequence of a macrolide-resistant serotype M6 strain.</title>
        <authorList>
            <person name="Banks D.J."/>
            <person name="Porcella S.F."/>
            <person name="Barbian K.D."/>
            <person name="Beres S.B."/>
            <person name="Philips L.E."/>
            <person name="Voyich J.M."/>
            <person name="DeLeo F.R."/>
            <person name="Martin J.M."/>
            <person name="Somerville G.A."/>
            <person name="Musser J.M."/>
        </authorList>
    </citation>
    <scope>NUCLEOTIDE SEQUENCE [LARGE SCALE GENOMIC DNA]</scope>
    <source>
        <strain>ATCC BAA-946 / MGAS10394</strain>
    </source>
</reference>
<feature type="initiator methionine" description="Removed" evidence="1">
    <location>
        <position position="1"/>
    </location>
</feature>
<feature type="chain" id="PRO_0000168401" description="L-lactate dehydrogenase">
    <location>
        <begin position="2"/>
        <end position="327"/>
    </location>
</feature>
<feature type="active site" description="Proton acceptor" evidence="2">
    <location>
        <position position="179"/>
    </location>
</feature>
<feature type="binding site" evidence="2">
    <location>
        <position position="18"/>
    </location>
    <ligand>
        <name>NAD(+)</name>
        <dbReference type="ChEBI" id="CHEBI:57540"/>
    </ligand>
</feature>
<feature type="binding site" evidence="2">
    <location>
        <position position="39"/>
    </location>
    <ligand>
        <name>NAD(+)</name>
        <dbReference type="ChEBI" id="CHEBI:57540"/>
    </ligand>
</feature>
<feature type="binding site" evidence="2">
    <location>
        <position position="44"/>
    </location>
    <ligand>
        <name>NAD(+)</name>
        <dbReference type="ChEBI" id="CHEBI:57540"/>
    </ligand>
</feature>
<feature type="binding site" evidence="2">
    <location>
        <position position="69"/>
    </location>
    <ligand>
        <name>NAD(+)</name>
        <dbReference type="ChEBI" id="CHEBI:57540"/>
    </ligand>
</feature>
<feature type="binding site" evidence="2">
    <location>
        <begin position="83"/>
        <end position="84"/>
    </location>
    <ligand>
        <name>NAD(+)</name>
        <dbReference type="ChEBI" id="CHEBI:57540"/>
    </ligand>
</feature>
<feature type="binding site" evidence="2">
    <location>
        <position position="86"/>
    </location>
    <ligand>
        <name>substrate</name>
    </ligand>
</feature>
<feature type="binding site" evidence="2">
    <location>
        <position position="92"/>
    </location>
    <ligand>
        <name>substrate</name>
    </ligand>
</feature>
<feature type="binding site" evidence="2">
    <location>
        <begin position="122"/>
        <end position="124"/>
    </location>
    <ligand>
        <name>NAD(+)</name>
        <dbReference type="ChEBI" id="CHEBI:57540"/>
    </ligand>
</feature>
<feature type="binding site" evidence="2">
    <location>
        <begin position="124"/>
        <end position="127"/>
    </location>
    <ligand>
        <name>substrate</name>
    </ligand>
</feature>
<feature type="binding site" evidence="2">
    <location>
        <position position="147"/>
    </location>
    <ligand>
        <name>NAD(+)</name>
        <dbReference type="ChEBI" id="CHEBI:57540"/>
    </ligand>
</feature>
<feature type="binding site" evidence="2">
    <location>
        <begin position="152"/>
        <end position="155"/>
    </location>
    <ligand>
        <name>substrate</name>
    </ligand>
</feature>
<feature type="binding site" evidence="2">
    <location>
        <position position="157"/>
    </location>
    <ligand>
        <name>beta-D-fructose 1,6-bisphosphate</name>
        <dbReference type="ChEBI" id="CHEBI:32966"/>
        <note>allosteric activator</note>
    </ligand>
</feature>
<feature type="binding site" evidence="2">
    <location>
        <position position="172"/>
    </location>
    <ligand>
        <name>beta-D-fructose 1,6-bisphosphate</name>
        <dbReference type="ChEBI" id="CHEBI:32966"/>
        <note>allosteric activator</note>
    </ligand>
</feature>
<feature type="binding site" evidence="2">
    <location>
        <position position="233"/>
    </location>
    <ligand>
        <name>substrate</name>
    </ligand>
</feature>
<feature type="modified residue" description="Phosphotyrosine" evidence="2">
    <location>
        <position position="224"/>
    </location>
</feature>